<comment type="function">
    <text evidence="1">Part of a membrane-bound complex that couples electron transfer with translocation of ions across the membrane.</text>
</comment>
<comment type="subunit">
    <text evidence="1">The complex is composed of six subunits: RnfA, RnfB, RnfC, RnfD, RnfE and RnfG.</text>
</comment>
<comment type="subcellular location">
    <subcellularLocation>
        <location evidence="1">Cell inner membrane</location>
        <topology evidence="1">Multi-pass membrane protein</topology>
    </subcellularLocation>
</comment>
<comment type="similarity">
    <text evidence="1">Belongs to the NqrDE/RnfAE family.</text>
</comment>
<accession>A1SSX5</accession>
<proteinExistence type="inferred from homology"/>
<evidence type="ECO:0000255" key="1">
    <source>
        <dbReference type="HAMAP-Rule" id="MF_00459"/>
    </source>
</evidence>
<protein>
    <recommendedName>
        <fullName evidence="1">Ion-translocating oxidoreductase complex subunit A</fullName>
        <ecNumber evidence="1">7.-.-.-</ecNumber>
    </recommendedName>
    <alternativeName>
        <fullName evidence="1">Rnf electron transport complex subunit A</fullName>
    </alternativeName>
</protein>
<feature type="chain" id="PRO_1000013541" description="Ion-translocating oxidoreductase complex subunit A">
    <location>
        <begin position="1"/>
        <end position="192"/>
    </location>
</feature>
<feature type="transmembrane region" description="Helical" evidence="1">
    <location>
        <begin position="5"/>
        <end position="25"/>
    </location>
</feature>
<feature type="transmembrane region" description="Helical" evidence="1">
    <location>
        <begin position="39"/>
        <end position="59"/>
    </location>
</feature>
<feature type="transmembrane region" description="Helical" evidence="1">
    <location>
        <begin position="63"/>
        <end position="83"/>
    </location>
</feature>
<feature type="transmembrane region" description="Helical" evidence="1">
    <location>
        <begin position="102"/>
        <end position="122"/>
    </location>
</feature>
<feature type="transmembrane region" description="Helical" evidence="1">
    <location>
        <begin position="134"/>
        <end position="154"/>
    </location>
</feature>
<feature type="transmembrane region" description="Helical" evidence="1">
    <location>
        <begin position="171"/>
        <end position="191"/>
    </location>
</feature>
<reference key="1">
    <citation type="journal article" date="2008" name="BMC Genomics">
        <title>Genomics of an extreme psychrophile, Psychromonas ingrahamii.</title>
        <authorList>
            <person name="Riley M."/>
            <person name="Staley J.T."/>
            <person name="Danchin A."/>
            <person name="Wang T.Z."/>
            <person name="Brettin T.S."/>
            <person name="Hauser L.J."/>
            <person name="Land M.L."/>
            <person name="Thompson L.S."/>
        </authorList>
    </citation>
    <scope>NUCLEOTIDE SEQUENCE [LARGE SCALE GENOMIC DNA]</scope>
    <source>
        <strain>DSM 17664 / CCUG 51855 / 37</strain>
    </source>
</reference>
<sequence length="192" mass="20885">MSDYFLLFIGTVLVNNFVLVKFLGLCPFMGVSNKIETAVGMSFATTFVLTLTAAVSYIVNKYILLPLDLVYLQTIGFILVIAVVVQFTEMVMHKTSPTLYRLLGIFLPLITTNCAILGLALLNINEDHDFVESIIYGFSAGVGFSLVLVVFSSMRERLAASDIPLPFKGGSIAMITAGLMSLAFMGFTGLIK</sequence>
<organism>
    <name type="scientific">Psychromonas ingrahamii (strain DSM 17664 / CCUG 51855 / 37)</name>
    <dbReference type="NCBI Taxonomy" id="357804"/>
    <lineage>
        <taxon>Bacteria</taxon>
        <taxon>Pseudomonadati</taxon>
        <taxon>Pseudomonadota</taxon>
        <taxon>Gammaproteobacteria</taxon>
        <taxon>Alteromonadales</taxon>
        <taxon>Psychromonadaceae</taxon>
        <taxon>Psychromonas</taxon>
    </lineage>
</organism>
<gene>
    <name evidence="1" type="primary">rnfA</name>
    <name type="ordered locus">Ping_0738</name>
</gene>
<dbReference type="EC" id="7.-.-.-" evidence="1"/>
<dbReference type="EMBL" id="CP000510">
    <property type="protein sequence ID" value="ABM02590.1"/>
    <property type="molecule type" value="Genomic_DNA"/>
</dbReference>
<dbReference type="RefSeq" id="WP_011769149.1">
    <property type="nucleotide sequence ID" value="NC_008709.1"/>
</dbReference>
<dbReference type="SMR" id="A1SSX5"/>
<dbReference type="STRING" id="357804.Ping_0738"/>
<dbReference type="KEGG" id="pin:Ping_0738"/>
<dbReference type="eggNOG" id="COG4657">
    <property type="taxonomic scope" value="Bacteria"/>
</dbReference>
<dbReference type="HOGENOM" id="CLU_095255_1_0_6"/>
<dbReference type="OrthoDB" id="9803631at2"/>
<dbReference type="Proteomes" id="UP000000639">
    <property type="component" value="Chromosome"/>
</dbReference>
<dbReference type="GO" id="GO:0005886">
    <property type="term" value="C:plasma membrane"/>
    <property type="evidence" value="ECO:0007669"/>
    <property type="project" value="UniProtKB-SubCell"/>
</dbReference>
<dbReference type="GO" id="GO:0022900">
    <property type="term" value="P:electron transport chain"/>
    <property type="evidence" value="ECO:0007669"/>
    <property type="project" value="UniProtKB-UniRule"/>
</dbReference>
<dbReference type="HAMAP" id="MF_00459">
    <property type="entry name" value="RsxA_RnfA"/>
    <property type="match status" value="1"/>
</dbReference>
<dbReference type="InterPro" id="IPR011293">
    <property type="entry name" value="Ion_transpt_RnfA/RsxA"/>
</dbReference>
<dbReference type="InterPro" id="IPR003667">
    <property type="entry name" value="NqrDE/RnfAE"/>
</dbReference>
<dbReference type="InterPro" id="IPR050133">
    <property type="entry name" value="NqrDE/RnfAE_oxidrdctase"/>
</dbReference>
<dbReference type="NCBIfam" id="NF003481">
    <property type="entry name" value="PRK05151.1"/>
    <property type="match status" value="1"/>
</dbReference>
<dbReference type="NCBIfam" id="TIGR01943">
    <property type="entry name" value="rnfA"/>
    <property type="match status" value="1"/>
</dbReference>
<dbReference type="PANTHER" id="PTHR30335">
    <property type="entry name" value="INTEGRAL MEMBRANE PROTEIN OF SOXR-REDUCING COMPLEX"/>
    <property type="match status" value="1"/>
</dbReference>
<dbReference type="PANTHER" id="PTHR30335:SF0">
    <property type="entry name" value="ION-TRANSLOCATING OXIDOREDUCTASE COMPLEX SUBUNIT A"/>
    <property type="match status" value="1"/>
</dbReference>
<dbReference type="Pfam" id="PF02508">
    <property type="entry name" value="Rnf-Nqr"/>
    <property type="match status" value="1"/>
</dbReference>
<dbReference type="PIRSF" id="PIRSF006102">
    <property type="entry name" value="NQR_DE"/>
    <property type="match status" value="1"/>
</dbReference>
<keyword id="KW-0997">Cell inner membrane</keyword>
<keyword id="KW-1003">Cell membrane</keyword>
<keyword id="KW-0249">Electron transport</keyword>
<keyword id="KW-0472">Membrane</keyword>
<keyword id="KW-1185">Reference proteome</keyword>
<keyword id="KW-1278">Translocase</keyword>
<keyword id="KW-0812">Transmembrane</keyword>
<keyword id="KW-1133">Transmembrane helix</keyword>
<keyword id="KW-0813">Transport</keyword>
<name>RNFA_PSYIN</name>